<feature type="chain" id="PRO_0000450647" description="Noroxomaritidine synthase 2">
    <location>
        <begin position="1"/>
        <end position="513"/>
    </location>
</feature>
<feature type="transmembrane region" description="Helical" evidence="3">
    <location>
        <begin position="14"/>
        <end position="34"/>
    </location>
</feature>
<feature type="binding site" description="axial binding residue" evidence="2">
    <location>
        <position position="458"/>
    </location>
    <ligand>
        <name>heme</name>
        <dbReference type="ChEBI" id="CHEBI:30413"/>
    </ligand>
    <ligandPart>
        <name>Fe</name>
        <dbReference type="ChEBI" id="CHEBI:18248"/>
    </ligandPart>
</feature>
<sequence length="513" mass="58974">MATSSSAWLMFSDHYPEILIAIACFLIFSLLLSARSSSKDSLPYNWPIFGMLPAIISNNQFNDFTTARLRKMGWTFIFKGPWLLDMDYIFTCDPSNINHMFNDNFENYPKGELGKVFDIFGNNIFNADGDLWHDHRKMAQTILWDGNYRTMQATFIRNKMDNALIPILDSAACKRKPVDLQDVLLRFTFDTSCFSVLAADPESLTMEFPPVPFSKAADQALDAALTRHITPRLIWKLKRFFNVGSERTLAVAWKVIDSYIYDKIAELKAKRKLVGKINSYDAVSFYMDNFNIHDDKFLRDNAFTYLLAQRNTQSLTMTWLFYALFENPKVELKILSELKSIVDESSERKFNDGFALFDSNMIQSAIYLHATLCEALRIYPPVPFEIKDAHKADVLPSGHKVRAGEKILFSPYAMARMKGIWGDDCLEFKPERWITGNGTLKHEPAYKFFAFSAGPRICLGKELSFTQMKMVVATIIYNFHLQMVKGHVVEQSNSILMDMKHGLMVQVRKRSVM</sequence>
<proteinExistence type="evidence at transcript level"/>
<reference key="1">
    <citation type="journal article" date="2017" name="Sci. Rep.">
        <title>Transcriptome and metabolome profiling of Narcissus pseudonarcissus 'King Alfred' reveal components of Amaryllidaceae alkaloid metabolism.</title>
        <authorList>
            <person name="Singh A."/>
            <person name="Desgagne-Penix I."/>
        </authorList>
    </citation>
    <scope>NUCLEOTIDE SEQUENCE [MRNA]</scope>
    <scope>REVIEW ON THE AMARYLLIDACEAE ALKALOID METABOLISM</scope>
    <scope>PATHWAY</scope>
    <scope>TISSUE SPECIFICITY</scope>
    <scope>GENE FAMILY</scope>
    <scope>NOMENCLATURE</scope>
    <source>
        <strain>cv. King Alfred</strain>
        <tissue>Bulb</tissue>
    </source>
</reference>
<dbReference type="EC" id="1.14.19.50" evidence="1"/>
<dbReference type="EMBL" id="MF416098">
    <property type="protein sequence ID" value="AUG71943.1"/>
    <property type="molecule type" value="mRNA"/>
</dbReference>
<dbReference type="SMR" id="A0A2H5AIZ9"/>
<dbReference type="GO" id="GO:0016020">
    <property type="term" value="C:membrane"/>
    <property type="evidence" value="ECO:0007669"/>
    <property type="project" value="UniProtKB-SubCell"/>
</dbReference>
<dbReference type="GO" id="GO:0020037">
    <property type="term" value="F:heme binding"/>
    <property type="evidence" value="ECO:0007669"/>
    <property type="project" value="InterPro"/>
</dbReference>
<dbReference type="GO" id="GO:0005506">
    <property type="term" value="F:iron ion binding"/>
    <property type="evidence" value="ECO:0007669"/>
    <property type="project" value="InterPro"/>
</dbReference>
<dbReference type="GO" id="GO:0004497">
    <property type="term" value="F:monooxygenase activity"/>
    <property type="evidence" value="ECO:0007669"/>
    <property type="project" value="UniProtKB-KW"/>
</dbReference>
<dbReference type="GO" id="GO:0016705">
    <property type="term" value="F:oxidoreductase activity, acting on paired donors, with incorporation or reduction of molecular oxygen"/>
    <property type="evidence" value="ECO:0007669"/>
    <property type="project" value="InterPro"/>
</dbReference>
<dbReference type="GO" id="GO:0009820">
    <property type="term" value="P:alkaloid metabolic process"/>
    <property type="evidence" value="ECO:0007669"/>
    <property type="project" value="UniProtKB-KW"/>
</dbReference>
<dbReference type="GO" id="GO:0006629">
    <property type="term" value="P:lipid metabolic process"/>
    <property type="evidence" value="ECO:0007669"/>
    <property type="project" value="UniProtKB-ARBA"/>
</dbReference>
<dbReference type="CDD" id="cd11064">
    <property type="entry name" value="CYP86A"/>
    <property type="match status" value="1"/>
</dbReference>
<dbReference type="Gene3D" id="1.10.630.10">
    <property type="entry name" value="Cytochrome P450"/>
    <property type="match status" value="1"/>
</dbReference>
<dbReference type="InterPro" id="IPR001128">
    <property type="entry name" value="Cyt_P450"/>
</dbReference>
<dbReference type="InterPro" id="IPR017972">
    <property type="entry name" value="Cyt_P450_CS"/>
</dbReference>
<dbReference type="InterPro" id="IPR002401">
    <property type="entry name" value="Cyt_P450_E_grp-I"/>
</dbReference>
<dbReference type="InterPro" id="IPR036396">
    <property type="entry name" value="Cyt_P450_sf"/>
</dbReference>
<dbReference type="PANTHER" id="PTHR24296">
    <property type="entry name" value="CYTOCHROME P450"/>
    <property type="match status" value="1"/>
</dbReference>
<dbReference type="Pfam" id="PF00067">
    <property type="entry name" value="p450"/>
    <property type="match status" value="1"/>
</dbReference>
<dbReference type="PRINTS" id="PR00463">
    <property type="entry name" value="EP450I"/>
</dbReference>
<dbReference type="PRINTS" id="PR00385">
    <property type="entry name" value="P450"/>
</dbReference>
<dbReference type="SUPFAM" id="SSF48264">
    <property type="entry name" value="Cytochrome P450"/>
    <property type="match status" value="1"/>
</dbReference>
<dbReference type="PROSITE" id="PS00086">
    <property type="entry name" value="CYTOCHROME_P450"/>
    <property type="match status" value="1"/>
</dbReference>
<accession>A0A2H5AIZ9</accession>
<name>C96T2_NARPS</name>
<gene>
    <name evidence="5" type="primary">Cyp96T2</name>
</gene>
<evidence type="ECO:0000250" key="1">
    <source>
        <dbReference type="UniProtKB" id="A0A140IL90"/>
    </source>
</evidence>
<evidence type="ECO:0000250" key="2">
    <source>
        <dbReference type="UniProtKB" id="Q96242"/>
    </source>
</evidence>
<evidence type="ECO:0000255" key="3"/>
<evidence type="ECO:0000269" key="4">
    <source>
    </source>
</evidence>
<evidence type="ECO:0000303" key="5">
    <source>
    </source>
</evidence>
<evidence type="ECO:0000305" key="6"/>
<protein>
    <recommendedName>
        <fullName evidence="5">Noroxomaritidine synthase 2</fullName>
        <ecNumber evidence="1">1.14.19.50</ecNumber>
    </recommendedName>
    <alternativeName>
        <fullName evidence="5">CYP96T2</fullName>
    </alternativeName>
    <alternativeName>
        <fullName evidence="5">Cytochrome P450 96T2</fullName>
    </alternativeName>
</protein>
<keyword id="KW-0017">Alkaloid metabolism</keyword>
<keyword id="KW-0349">Heme</keyword>
<keyword id="KW-0408">Iron</keyword>
<keyword id="KW-0472">Membrane</keyword>
<keyword id="KW-0479">Metal-binding</keyword>
<keyword id="KW-0503">Monooxygenase</keyword>
<keyword id="KW-0560">Oxidoreductase</keyword>
<keyword id="KW-0812">Transmembrane</keyword>
<keyword id="KW-1133">Transmembrane helix</keyword>
<organism>
    <name type="scientific">Narcissus pseudonarcissus</name>
    <name type="common">Daffodil</name>
    <dbReference type="NCBI Taxonomy" id="39639"/>
    <lineage>
        <taxon>Eukaryota</taxon>
        <taxon>Viridiplantae</taxon>
        <taxon>Streptophyta</taxon>
        <taxon>Embryophyta</taxon>
        <taxon>Tracheophyta</taxon>
        <taxon>Spermatophyta</taxon>
        <taxon>Magnoliopsida</taxon>
        <taxon>Liliopsida</taxon>
        <taxon>Asparagales</taxon>
        <taxon>Amaryllidaceae</taxon>
        <taxon>Amaryllidoideae</taxon>
        <taxon>Narcissus</taxon>
    </lineage>
</organism>
<comment type="function">
    <text evidence="1">Cytochrome P450 that catalyzes an intramolecular para-para' C-C phenol coupling of 4'-O-methylnorbelladine in alkaloids biosynthesis, including haemanthamine- and crinamine-type alkaloids, promising anticancer agents. Catalyzes the formation of (10bR,4aS)-noroxomaritidine and (10bS,4aR)-noroxomaritidine from 4'-O-methylnorbelladine.</text>
</comment>
<comment type="catalytic activity">
    <reaction evidence="1">
        <text>4'-O-methylnorbelladine + reduced [NADPH--hemoprotein reductase] + O2 = (10bR,4aS)-noroxomaritidine + oxidized [NADPH--hemoprotein reductase] + 2 H2O + H(+)</text>
        <dbReference type="Rhea" id="RHEA:51260"/>
        <dbReference type="Rhea" id="RHEA-COMP:11964"/>
        <dbReference type="Rhea" id="RHEA-COMP:11965"/>
        <dbReference type="ChEBI" id="CHEBI:15377"/>
        <dbReference type="ChEBI" id="CHEBI:15378"/>
        <dbReference type="ChEBI" id="CHEBI:15379"/>
        <dbReference type="ChEBI" id="CHEBI:57618"/>
        <dbReference type="ChEBI" id="CHEBI:58210"/>
        <dbReference type="ChEBI" id="CHEBI:133993"/>
        <dbReference type="ChEBI" id="CHEBI:133995"/>
        <dbReference type="EC" id="1.14.19.50"/>
    </reaction>
</comment>
<comment type="catalytic activity">
    <reaction evidence="1">
        <text>4'-O-methylnorbelladine + reduced [NADPH--hemoprotein reductase] + O2 = (10bS,4aR)-noroxomaritidine + oxidized [NADPH--hemoprotein reductase] + 2 H2O + H(+)</text>
        <dbReference type="Rhea" id="RHEA:51264"/>
        <dbReference type="Rhea" id="RHEA-COMP:11964"/>
        <dbReference type="Rhea" id="RHEA-COMP:11965"/>
        <dbReference type="ChEBI" id="CHEBI:15377"/>
        <dbReference type="ChEBI" id="CHEBI:15378"/>
        <dbReference type="ChEBI" id="CHEBI:15379"/>
        <dbReference type="ChEBI" id="CHEBI:57618"/>
        <dbReference type="ChEBI" id="CHEBI:58210"/>
        <dbReference type="ChEBI" id="CHEBI:133993"/>
        <dbReference type="ChEBI" id="CHEBI:133996"/>
        <dbReference type="EC" id="1.14.19.50"/>
    </reaction>
</comment>
<comment type="cofactor">
    <cofactor evidence="2">
        <name>heme</name>
        <dbReference type="ChEBI" id="CHEBI:30413"/>
    </cofactor>
</comment>
<comment type="pathway">
    <text evidence="1">Alkaloid biosynthesis.</text>
</comment>
<comment type="pathway">
    <text evidence="5">Alkaloid biosynthesis.</text>
</comment>
<comment type="subcellular location">
    <subcellularLocation>
        <location evidence="3">Membrane</location>
        <topology evidence="3">Single-pass membrane protein</topology>
    </subcellularLocation>
</comment>
<comment type="tissue specificity">
    <text evidence="4">Mostly expressed in stems, and, to a lower extent, in bulbs, roots, leaves and flowers.</text>
</comment>
<comment type="similarity">
    <text evidence="6">Belongs to the cytochrome P450 family.</text>
</comment>